<evidence type="ECO:0000250" key="1"/>
<evidence type="ECO:0000255" key="2">
    <source>
        <dbReference type="HAMAP-Rule" id="MF_00118"/>
    </source>
</evidence>
<comment type="function">
    <text evidence="2">GTP hydrolase that promotes the GTP-dependent binding of aminoacyl-tRNA to the A-site of ribosomes during protein biosynthesis.</text>
</comment>
<comment type="catalytic activity">
    <reaction evidence="2">
        <text>GTP + H2O = GDP + phosphate + H(+)</text>
        <dbReference type="Rhea" id="RHEA:19669"/>
        <dbReference type="ChEBI" id="CHEBI:15377"/>
        <dbReference type="ChEBI" id="CHEBI:15378"/>
        <dbReference type="ChEBI" id="CHEBI:37565"/>
        <dbReference type="ChEBI" id="CHEBI:43474"/>
        <dbReference type="ChEBI" id="CHEBI:58189"/>
        <dbReference type="EC" id="3.6.5.3"/>
    </reaction>
    <physiologicalReaction direction="left-to-right" evidence="2">
        <dbReference type="Rhea" id="RHEA:19670"/>
    </physiologicalReaction>
</comment>
<comment type="subunit">
    <text evidence="2">Monomer.</text>
</comment>
<comment type="subcellular location">
    <subcellularLocation>
        <location evidence="2">Cytoplasm</location>
    </subcellularLocation>
</comment>
<comment type="similarity">
    <text evidence="2">Belongs to the TRAFAC class translation factor GTPase superfamily. Classic translation factor GTPase family. EF-Tu/EF-1A subfamily.</text>
</comment>
<organism>
    <name type="scientific">Nitrosomonas eutropha (strain DSM 101675 / C91 / Nm57)</name>
    <dbReference type="NCBI Taxonomy" id="335283"/>
    <lineage>
        <taxon>Bacteria</taxon>
        <taxon>Pseudomonadati</taxon>
        <taxon>Pseudomonadota</taxon>
        <taxon>Betaproteobacteria</taxon>
        <taxon>Nitrosomonadales</taxon>
        <taxon>Nitrosomonadaceae</taxon>
        <taxon>Nitrosomonas</taxon>
    </lineage>
</organism>
<proteinExistence type="inferred from homology"/>
<gene>
    <name evidence="2" type="primary">tuf1</name>
    <name type="ordered locus">Neut_0556</name>
</gene>
<feature type="chain" id="PRO_0000337445" description="Elongation factor Tu 1">
    <location>
        <begin position="1"/>
        <end position="396"/>
    </location>
</feature>
<feature type="domain" description="tr-type G">
    <location>
        <begin position="10"/>
        <end position="206"/>
    </location>
</feature>
<feature type="region of interest" description="G1" evidence="1">
    <location>
        <begin position="19"/>
        <end position="26"/>
    </location>
</feature>
<feature type="region of interest" description="G2" evidence="1">
    <location>
        <begin position="60"/>
        <end position="64"/>
    </location>
</feature>
<feature type="region of interest" description="G3" evidence="1">
    <location>
        <begin position="81"/>
        <end position="84"/>
    </location>
</feature>
<feature type="region of interest" description="G4" evidence="1">
    <location>
        <begin position="136"/>
        <end position="139"/>
    </location>
</feature>
<feature type="region of interest" description="G5" evidence="1">
    <location>
        <begin position="174"/>
        <end position="176"/>
    </location>
</feature>
<feature type="binding site" evidence="2">
    <location>
        <begin position="19"/>
        <end position="26"/>
    </location>
    <ligand>
        <name>GTP</name>
        <dbReference type="ChEBI" id="CHEBI:37565"/>
    </ligand>
</feature>
<feature type="binding site" evidence="2">
    <location>
        <position position="26"/>
    </location>
    <ligand>
        <name>Mg(2+)</name>
        <dbReference type="ChEBI" id="CHEBI:18420"/>
    </ligand>
</feature>
<feature type="binding site" evidence="2">
    <location>
        <begin position="81"/>
        <end position="85"/>
    </location>
    <ligand>
        <name>GTP</name>
        <dbReference type="ChEBI" id="CHEBI:37565"/>
    </ligand>
</feature>
<feature type="binding site" evidence="2">
    <location>
        <begin position="136"/>
        <end position="139"/>
    </location>
    <ligand>
        <name>GTP</name>
        <dbReference type="ChEBI" id="CHEBI:37565"/>
    </ligand>
</feature>
<keyword id="KW-0963">Cytoplasm</keyword>
<keyword id="KW-0251">Elongation factor</keyword>
<keyword id="KW-0342">GTP-binding</keyword>
<keyword id="KW-0378">Hydrolase</keyword>
<keyword id="KW-0460">Magnesium</keyword>
<keyword id="KW-0479">Metal-binding</keyword>
<keyword id="KW-0547">Nucleotide-binding</keyword>
<keyword id="KW-0648">Protein biosynthesis</keyword>
<accession>Q0AIJ7</accession>
<sequence>MAKSKFERVKPHINVGTIGHVDHGKTTLTAAITTILTRKFGGEAKSYAQIDSAPEERARGITINTSHVEYETDKRHYAHVDCPGHADYVKNMITGAAQMDGAILVVSAADGPMPQTREHILLARQVGVPYIIVFMNKADMVDDAELLELVEMEIRELLSKYDFPGDDTPIIIGSALKALEGDKGDIGEAAILKLAEVLDSYIPEPQRAIDGAFIMPVEDVFSISGRGTVVTGRVERGIVKVGDEIEIVGLRPTIKTTCTGVEMFRKLLDQGQAGDNVGILLRGTKREEVERGQVLAKPGSILPHTKFSAEIYVLSKEEGGRHTPFFAGYRPQFYFRTTDVTGSIELPAGVEMVMPGDNISVNVNLIAPIAMSEGLRFAIREGGRTVGAGVVAKVIE</sequence>
<reference key="1">
    <citation type="journal article" date="2007" name="Environ. Microbiol.">
        <title>Whole-genome analysis of the ammonia-oxidizing bacterium, Nitrosomonas eutropha C91: implications for niche adaptation.</title>
        <authorList>
            <person name="Stein L.Y."/>
            <person name="Arp D.J."/>
            <person name="Berube P.M."/>
            <person name="Chain P.S."/>
            <person name="Hauser L."/>
            <person name="Jetten M.S."/>
            <person name="Klotz M.G."/>
            <person name="Larimer F.W."/>
            <person name="Norton J.M."/>
            <person name="Op den Camp H.J.M."/>
            <person name="Shin M."/>
            <person name="Wei X."/>
        </authorList>
    </citation>
    <scope>NUCLEOTIDE SEQUENCE [LARGE SCALE GENOMIC DNA]</scope>
    <source>
        <strain>DSM 101675 / C91 / Nm57</strain>
    </source>
</reference>
<dbReference type="EC" id="3.6.5.3" evidence="2"/>
<dbReference type="EMBL" id="CP000450">
    <property type="protein sequence ID" value="ABI58829.1"/>
    <property type="molecule type" value="Genomic_DNA"/>
</dbReference>
<dbReference type="RefSeq" id="WP_011633671.1">
    <property type="nucleotide sequence ID" value="NC_008344.1"/>
</dbReference>
<dbReference type="SMR" id="Q0AIJ7"/>
<dbReference type="STRING" id="335283.Neut_0556"/>
<dbReference type="KEGG" id="net:Neut_0556"/>
<dbReference type="eggNOG" id="COG0050">
    <property type="taxonomic scope" value="Bacteria"/>
</dbReference>
<dbReference type="HOGENOM" id="CLU_007265_0_2_4"/>
<dbReference type="OrthoDB" id="9803139at2"/>
<dbReference type="Proteomes" id="UP000001966">
    <property type="component" value="Chromosome"/>
</dbReference>
<dbReference type="GO" id="GO:0005829">
    <property type="term" value="C:cytosol"/>
    <property type="evidence" value="ECO:0007669"/>
    <property type="project" value="TreeGrafter"/>
</dbReference>
<dbReference type="GO" id="GO:0005525">
    <property type="term" value="F:GTP binding"/>
    <property type="evidence" value="ECO:0007669"/>
    <property type="project" value="UniProtKB-UniRule"/>
</dbReference>
<dbReference type="GO" id="GO:0003924">
    <property type="term" value="F:GTPase activity"/>
    <property type="evidence" value="ECO:0007669"/>
    <property type="project" value="InterPro"/>
</dbReference>
<dbReference type="GO" id="GO:0097216">
    <property type="term" value="F:guanosine tetraphosphate binding"/>
    <property type="evidence" value="ECO:0007669"/>
    <property type="project" value="UniProtKB-ARBA"/>
</dbReference>
<dbReference type="GO" id="GO:0003746">
    <property type="term" value="F:translation elongation factor activity"/>
    <property type="evidence" value="ECO:0007669"/>
    <property type="project" value="UniProtKB-UniRule"/>
</dbReference>
<dbReference type="CDD" id="cd01884">
    <property type="entry name" value="EF_Tu"/>
    <property type="match status" value="1"/>
</dbReference>
<dbReference type="CDD" id="cd03697">
    <property type="entry name" value="EFTU_II"/>
    <property type="match status" value="1"/>
</dbReference>
<dbReference type="CDD" id="cd03707">
    <property type="entry name" value="EFTU_III"/>
    <property type="match status" value="1"/>
</dbReference>
<dbReference type="FunFam" id="2.40.30.10:FF:000001">
    <property type="entry name" value="Elongation factor Tu"/>
    <property type="match status" value="1"/>
</dbReference>
<dbReference type="FunFam" id="3.40.50.300:FF:000003">
    <property type="entry name" value="Elongation factor Tu"/>
    <property type="match status" value="1"/>
</dbReference>
<dbReference type="Gene3D" id="3.40.50.300">
    <property type="entry name" value="P-loop containing nucleotide triphosphate hydrolases"/>
    <property type="match status" value="1"/>
</dbReference>
<dbReference type="Gene3D" id="2.40.30.10">
    <property type="entry name" value="Translation factors"/>
    <property type="match status" value="2"/>
</dbReference>
<dbReference type="HAMAP" id="MF_00118_B">
    <property type="entry name" value="EF_Tu_B"/>
    <property type="match status" value="1"/>
</dbReference>
<dbReference type="InterPro" id="IPR041709">
    <property type="entry name" value="EF-Tu_GTP-bd"/>
</dbReference>
<dbReference type="InterPro" id="IPR050055">
    <property type="entry name" value="EF-Tu_GTPase"/>
</dbReference>
<dbReference type="InterPro" id="IPR004161">
    <property type="entry name" value="EFTu-like_2"/>
</dbReference>
<dbReference type="InterPro" id="IPR033720">
    <property type="entry name" value="EFTU_2"/>
</dbReference>
<dbReference type="InterPro" id="IPR031157">
    <property type="entry name" value="G_TR_CS"/>
</dbReference>
<dbReference type="InterPro" id="IPR027417">
    <property type="entry name" value="P-loop_NTPase"/>
</dbReference>
<dbReference type="InterPro" id="IPR005225">
    <property type="entry name" value="Small_GTP-bd"/>
</dbReference>
<dbReference type="InterPro" id="IPR000795">
    <property type="entry name" value="T_Tr_GTP-bd_dom"/>
</dbReference>
<dbReference type="InterPro" id="IPR009000">
    <property type="entry name" value="Transl_B-barrel_sf"/>
</dbReference>
<dbReference type="InterPro" id="IPR009001">
    <property type="entry name" value="Transl_elong_EF1A/Init_IF2_C"/>
</dbReference>
<dbReference type="InterPro" id="IPR004541">
    <property type="entry name" value="Transl_elong_EFTu/EF1A_bac/org"/>
</dbReference>
<dbReference type="InterPro" id="IPR004160">
    <property type="entry name" value="Transl_elong_EFTu/EF1A_C"/>
</dbReference>
<dbReference type="NCBIfam" id="TIGR00485">
    <property type="entry name" value="EF-Tu"/>
    <property type="match status" value="1"/>
</dbReference>
<dbReference type="NCBIfam" id="NF000766">
    <property type="entry name" value="PRK00049.1"/>
    <property type="match status" value="1"/>
</dbReference>
<dbReference type="NCBIfam" id="NF009372">
    <property type="entry name" value="PRK12735.1"/>
    <property type="match status" value="1"/>
</dbReference>
<dbReference type="NCBIfam" id="NF009373">
    <property type="entry name" value="PRK12736.1"/>
    <property type="match status" value="1"/>
</dbReference>
<dbReference type="NCBIfam" id="TIGR00231">
    <property type="entry name" value="small_GTP"/>
    <property type="match status" value="1"/>
</dbReference>
<dbReference type="PANTHER" id="PTHR43721:SF22">
    <property type="entry name" value="ELONGATION FACTOR TU, MITOCHONDRIAL"/>
    <property type="match status" value="1"/>
</dbReference>
<dbReference type="PANTHER" id="PTHR43721">
    <property type="entry name" value="ELONGATION FACTOR TU-RELATED"/>
    <property type="match status" value="1"/>
</dbReference>
<dbReference type="Pfam" id="PF00009">
    <property type="entry name" value="GTP_EFTU"/>
    <property type="match status" value="1"/>
</dbReference>
<dbReference type="Pfam" id="PF03144">
    <property type="entry name" value="GTP_EFTU_D2"/>
    <property type="match status" value="1"/>
</dbReference>
<dbReference type="Pfam" id="PF03143">
    <property type="entry name" value="GTP_EFTU_D3"/>
    <property type="match status" value="1"/>
</dbReference>
<dbReference type="PRINTS" id="PR00315">
    <property type="entry name" value="ELONGATNFCT"/>
</dbReference>
<dbReference type="SUPFAM" id="SSF50465">
    <property type="entry name" value="EF-Tu/eEF-1alpha/eIF2-gamma C-terminal domain"/>
    <property type="match status" value="1"/>
</dbReference>
<dbReference type="SUPFAM" id="SSF52540">
    <property type="entry name" value="P-loop containing nucleoside triphosphate hydrolases"/>
    <property type="match status" value="1"/>
</dbReference>
<dbReference type="SUPFAM" id="SSF50447">
    <property type="entry name" value="Translation proteins"/>
    <property type="match status" value="1"/>
</dbReference>
<dbReference type="PROSITE" id="PS00301">
    <property type="entry name" value="G_TR_1"/>
    <property type="match status" value="1"/>
</dbReference>
<dbReference type="PROSITE" id="PS51722">
    <property type="entry name" value="G_TR_2"/>
    <property type="match status" value="1"/>
</dbReference>
<protein>
    <recommendedName>
        <fullName evidence="2">Elongation factor Tu 1</fullName>
        <shortName evidence="2">EF-Tu 1</shortName>
        <ecNumber evidence="2">3.6.5.3</ecNumber>
    </recommendedName>
</protein>
<name>EFTU1_NITEC</name>